<comment type="function">
    <text>Component of the epidermal cornified cell envelopes.</text>
</comment>
<comment type="subcellular location">
    <subcellularLocation>
        <location>Cytoplasmic granule</location>
    </subcellularLocation>
    <text>Found in keratohyalin granules of the granular cells of the epidermis.</text>
</comment>
<comment type="tissue specificity">
    <text evidence="5">Embryonic skin. Highest level in the adult forestomach followed by the skin. Lower levels in the tongue, esophagus. Detected in the granular and cornified layers of the mature epidermis.</text>
</comment>
<comment type="developmental stage">
    <text>First detected on gestational day 15.5 in the epidermis.</text>
</comment>
<comment type="PTM">
    <text>Processed during the process of epidermal differentiation.</text>
</comment>
<comment type="PTM">
    <text evidence="1">Forms covalent cross-links mediated by transglutaminase TGM3, between glutamine and the epsilon-amino group of lysine residues (in vitro).</text>
</comment>
<comment type="similarity">
    <text evidence="6">Belongs to the S100-fused protein family.</text>
</comment>
<comment type="similarity">
    <text evidence="6">In the N-terminal section; belongs to the S-100 family.</text>
</comment>
<reference key="1">
    <citation type="journal article" date="2001" name="J. Biol. Chem.">
        <title>Hornerin, a novel profilaggrin-like protein and differentiation-specific marker isolated from mouse skin.</title>
        <authorList>
            <person name="Makino T."/>
            <person name="Takaishi M."/>
            <person name="Morohashi M."/>
            <person name="Huh N.-H."/>
        </authorList>
    </citation>
    <scope>NUCLEOTIDE SEQUENCE [MRNA]</scope>
    <source>
        <strain>ICR</strain>
    </source>
</reference>
<reference key="2">
    <citation type="journal article" date="2003" name="J. Histochem. Cytochem.">
        <title>Expression of hornerin in stratified squamous epithelium in the mouse: a comparative analysis with profilaggrin.</title>
        <authorList>
            <person name="Makino T."/>
            <person name="Takaishi M."/>
            <person name="Toyoda M."/>
            <person name="Morohashi M."/>
            <person name="Huh N.-H."/>
        </authorList>
    </citation>
    <scope>TISSUE SPECIFICITY</scope>
</reference>
<reference key="3">
    <citation type="journal article" date="2014" name="Mol. Cell. Proteomics">
        <title>Immunoaffinity enrichment and mass spectrometry analysis of protein methylation.</title>
        <authorList>
            <person name="Guo A."/>
            <person name="Gu H."/>
            <person name="Zhou J."/>
            <person name="Mulhern D."/>
            <person name="Wang Y."/>
            <person name="Lee K.A."/>
            <person name="Yang V."/>
            <person name="Aguiar M."/>
            <person name="Kornhauser J."/>
            <person name="Jia X."/>
            <person name="Ren J."/>
            <person name="Beausoleil S.A."/>
            <person name="Silva J.C."/>
            <person name="Vemulapalli V."/>
            <person name="Bedford M.T."/>
            <person name="Comb M.J."/>
        </authorList>
    </citation>
    <scope>METHYLATION [LARGE SCALE ANALYSIS] AT ARG-646; ARG-995; ARG-1343; ARG-1691; ARG-2039; ARG-2210 AND ARG-2381</scope>
    <scope>IDENTIFICATION BY MASS SPECTROMETRY [LARGE SCALE ANALYSIS]</scope>
    <source>
        <tissue>Embryo</tissue>
    </source>
</reference>
<proteinExistence type="evidence at protein level"/>
<evidence type="ECO:0000250" key="1"/>
<evidence type="ECO:0000250" key="2">
    <source>
        <dbReference type="UniProtKB" id="Q86YZ3"/>
    </source>
</evidence>
<evidence type="ECO:0000255" key="3">
    <source>
        <dbReference type="PROSITE-ProRule" id="PRU00448"/>
    </source>
</evidence>
<evidence type="ECO:0000256" key="4">
    <source>
        <dbReference type="SAM" id="MobiDB-lite"/>
    </source>
</evidence>
<evidence type="ECO:0000269" key="5">
    <source>
    </source>
</evidence>
<evidence type="ECO:0000305" key="6"/>
<evidence type="ECO:0007744" key="7">
    <source>
    </source>
</evidence>
<keyword id="KW-0106">Calcium</keyword>
<keyword id="KW-0217">Developmental protein</keyword>
<keyword id="KW-0417">Keratinization</keyword>
<keyword id="KW-0479">Metal-binding</keyword>
<keyword id="KW-0488">Methylation</keyword>
<keyword id="KW-0597">Phosphoprotein</keyword>
<keyword id="KW-1185">Reference proteome</keyword>
<keyword id="KW-0677">Repeat</keyword>
<protein>
    <recommendedName>
        <fullName>Hornerin</fullName>
    </recommendedName>
</protein>
<accession>Q8VHD8</accession>
<name>HORN_MOUSE</name>
<feature type="chain" id="PRO_0000144039" description="Hornerin">
    <location>
        <begin position="1"/>
        <end position="2496"/>
    </location>
</feature>
<feature type="domain" description="EF-hand 1" evidence="6">
    <location>
        <begin position="13"/>
        <end position="48"/>
    </location>
</feature>
<feature type="domain" description="EF-hand 2" evidence="3">
    <location>
        <begin position="49"/>
        <end position="84"/>
    </location>
</feature>
<feature type="repeat" description="1; truncated">
    <location>
        <begin position="99"/>
        <end position="145"/>
    </location>
</feature>
<feature type="repeat" description="2">
    <location>
        <begin position="146"/>
        <end position="231"/>
    </location>
</feature>
<feature type="repeat" description="3">
    <location>
        <begin position="232"/>
        <end position="321"/>
    </location>
</feature>
<feature type="repeat" description="4">
    <location>
        <begin position="326"/>
        <end position="400"/>
    </location>
</feature>
<feature type="repeat" description="5">
    <location>
        <begin position="401"/>
        <end position="491"/>
    </location>
</feature>
<feature type="repeat" description="6">
    <location>
        <begin position="492"/>
        <end position="577"/>
    </location>
</feature>
<feature type="repeat" description="7">
    <location>
        <begin position="578"/>
        <end position="668"/>
    </location>
</feature>
<feature type="repeat" description="8">
    <location>
        <begin position="669"/>
        <end position="748"/>
    </location>
</feature>
<feature type="repeat" description="9">
    <location>
        <begin position="749"/>
        <end position="839"/>
    </location>
</feature>
<feature type="repeat" description="10">
    <location>
        <begin position="840"/>
        <end position="926"/>
    </location>
</feature>
<feature type="repeat" description="11">
    <location>
        <begin position="927"/>
        <end position="1017"/>
    </location>
</feature>
<feature type="repeat" description="12">
    <location>
        <begin position="1018"/>
        <end position="1097"/>
    </location>
</feature>
<feature type="repeat" description="13">
    <location>
        <begin position="1098"/>
        <end position="1188"/>
    </location>
</feature>
<feature type="repeat" description="14">
    <location>
        <begin position="1189"/>
        <end position="1274"/>
    </location>
</feature>
<feature type="repeat" description="15">
    <location>
        <begin position="1275"/>
        <end position="1365"/>
    </location>
</feature>
<feature type="repeat" description="16">
    <location>
        <begin position="1366"/>
        <end position="1445"/>
    </location>
</feature>
<feature type="repeat" description="17">
    <location>
        <begin position="1446"/>
        <end position="1536"/>
    </location>
</feature>
<feature type="repeat" description="18">
    <location>
        <begin position="1537"/>
        <end position="1622"/>
    </location>
</feature>
<feature type="repeat" description="19">
    <location>
        <begin position="1623"/>
        <end position="1713"/>
    </location>
</feature>
<feature type="repeat" description="20">
    <location>
        <begin position="1714"/>
        <end position="1793"/>
    </location>
</feature>
<feature type="repeat" description="21">
    <location>
        <begin position="1794"/>
        <end position="1884"/>
    </location>
</feature>
<feature type="repeat" description="22">
    <location>
        <begin position="1885"/>
        <end position="1970"/>
    </location>
</feature>
<feature type="repeat" description="23">
    <location>
        <begin position="1971"/>
        <end position="2061"/>
    </location>
</feature>
<feature type="repeat" description="24">
    <location>
        <begin position="2062"/>
        <end position="2141"/>
    </location>
</feature>
<feature type="repeat" description="25">
    <location>
        <begin position="2142"/>
        <end position="2232"/>
    </location>
</feature>
<feature type="repeat" description="26">
    <location>
        <begin position="2233"/>
        <end position="2312"/>
    </location>
</feature>
<feature type="repeat" description="27">
    <location>
        <begin position="2313"/>
        <end position="2403"/>
    </location>
</feature>
<feature type="repeat" description="28">
    <location>
        <begin position="2410"/>
        <end position="2496"/>
    </location>
</feature>
<feature type="region of interest" description="S-100-like">
    <location>
        <begin position="1"/>
        <end position="81"/>
    </location>
</feature>
<feature type="region of interest" description="S (spacer)">
    <location>
        <begin position="82"/>
        <end position="98"/>
    </location>
</feature>
<feature type="region of interest" description="Disordered" evidence="4">
    <location>
        <begin position="97"/>
        <end position="2496"/>
    </location>
</feature>
<feature type="compositionally biased region" description="Basic and acidic residues" evidence="4">
    <location>
        <begin position="107"/>
        <end position="123"/>
    </location>
</feature>
<feature type="compositionally biased region" description="Polar residues" evidence="4">
    <location>
        <begin position="124"/>
        <end position="134"/>
    </location>
</feature>
<feature type="compositionally biased region" description="Basic residues" evidence="4">
    <location>
        <begin position="144"/>
        <end position="153"/>
    </location>
</feature>
<feature type="compositionally biased region" description="Low complexity" evidence="4">
    <location>
        <begin position="183"/>
        <end position="194"/>
    </location>
</feature>
<feature type="compositionally biased region" description="Low complexity" evidence="4">
    <location>
        <begin position="200"/>
        <end position="246"/>
    </location>
</feature>
<feature type="compositionally biased region" description="Low complexity" evidence="4">
    <location>
        <begin position="270"/>
        <end position="286"/>
    </location>
</feature>
<feature type="compositionally biased region" description="Polar residues" evidence="4">
    <location>
        <begin position="294"/>
        <end position="319"/>
    </location>
</feature>
<feature type="compositionally biased region" description="Polar residues" evidence="4">
    <location>
        <begin position="326"/>
        <end position="355"/>
    </location>
</feature>
<feature type="compositionally biased region" description="Low complexity" evidence="4">
    <location>
        <begin position="362"/>
        <end position="379"/>
    </location>
</feature>
<feature type="compositionally biased region" description="Low complexity" evidence="4">
    <location>
        <begin position="394"/>
        <end position="415"/>
    </location>
</feature>
<feature type="compositionally biased region" description="Low complexity" evidence="4">
    <location>
        <begin position="423"/>
        <end position="448"/>
    </location>
</feature>
<feature type="compositionally biased region" description="Gly residues" evidence="4">
    <location>
        <begin position="449"/>
        <end position="464"/>
    </location>
</feature>
<feature type="compositionally biased region" description="Low complexity" evidence="4">
    <location>
        <begin position="465"/>
        <end position="565"/>
    </location>
</feature>
<feature type="compositionally biased region" description="Gly residues" evidence="4">
    <location>
        <begin position="566"/>
        <end position="576"/>
    </location>
</feature>
<feature type="compositionally biased region" description="Low complexity" evidence="4">
    <location>
        <begin position="577"/>
        <end position="593"/>
    </location>
</feature>
<feature type="compositionally biased region" description="Low complexity" evidence="4">
    <location>
        <begin position="600"/>
        <end position="625"/>
    </location>
</feature>
<feature type="compositionally biased region" description="Gly residues" evidence="4">
    <location>
        <begin position="626"/>
        <end position="641"/>
    </location>
</feature>
<feature type="compositionally biased region" description="Low complexity" evidence="4">
    <location>
        <begin position="642"/>
        <end position="670"/>
    </location>
</feature>
<feature type="compositionally biased region" description="Low complexity" evidence="4">
    <location>
        <begin position="679"/>
        <end position="713"/>
    </location>
</feature>
<feature type="compositionally biased region" description="Low complexity" evidence="4">
    <location>
        <begin position="723"/>
        <end position="736"/>
    </location>
</feature>
<feature type="compositionally biased region" description="Gly residues" evidence="4">
    <location>
        <begin position="737"/>
        <end position="747"/>
    </location>
</feature>
<feature type="compositionally biased region" description="Low complexity" evidence="4">
    <location>
        <begin position="748"/>
        <end position="764"/>
    </location>
</feature>
<feature type="compositionally biased region" description="Low complexity" evidence="4">
    <location>
        <begin position="771"/>
        <end position="796"/>
    </location>
</feature>
<feature type="compositionally biased region" description="Low complexity" evidence="4">
    <location>
        <begin position="804"/>
        <end position="884"/>
    </location>
</feature>
<feature type="compositionally biased region" description="Low complexity" evidence="4">
    <location>
        <begin position="891"/>
        <end position="914"/>
    </location>
</feature>
<feature type="compositionally biased region" description="Gly residues" evidence="4">
    <location>
        <begin position="915"/>
        <end position="925"/>
    </location>
</feature>
<feature type="compositionally biased region" description="Low complexity" evidence="4">
    <location>
        <begin position="926"/>
        <end position="942"/>
    </location>
</feature>
<feature type="compositionally biased region" description="Low complexity" evidence="4">
    <location>
        <begin position="949"/>
        <end position="974"/>
    </location>
</feature>
<feature type="compositionally biased region" description="Gly residues" evidence="4">
    <location>
        <begin position="975"/>
        <end position="990"/>
    </location>
</feature>
<feature type="compositionally biased region" description="Low complexity" evidence="4">
    <location>
        <begin position="991"/>
        <end position="1019"/>
    </location>
</feature>
<feature type="compositionally biased region" description="Low complexity" evidence="4">
    <location>
        <begin position="1028"/>
        <end position="1062"/>
    </location>
</feature>
<feature type="compositionally biased region" description="Low complexity" evidence="4">
    <location>
        <begin position="1072"/>
        <end position="1085"/>
    </location>
</feature>
<feature type="compositionally biased region" description="Gly residues" evidence="4">
    <location>
        <begin position="1086"/>
        <end position="1096"/>
    </location>
</feature>
<feature type="compositionally biased region" description="Low complexity" evidence="4">
    <location>
        <begin position="1097"/>
        <end position="1113"/>
    </location>
</feature>
<feature type="compositionally biased region" description="Low complexity" evidence="4">
    <location>
        <begin position="1120"/>
        <end position="1145"/>
    </location>
</feature>
<feature type="compositionally biased region" description="Low complexity" evidence="4">
    <location>
        <begin position="1153"/>
        <end position="1262"/>
    </location>
</feature>
<feature type="compositionally biased region" description="Gly residues" evidence="4">
    <location>
        <begin position="1263"/>
        <end position="1273"/>
    </location>
</feature>
<feature type="compositionally biased region" description="Polar residues" evidence="4">
    <location>
        <begin position="1281"/>
        <end position="1292"/>
    </location>
</feature>
<feature type="compositionally biased region" description="Low complexity" evidence="4">
    <location>
        <begin position="1298"/>
        <end position="1322"/>
    </location>
</feature>
<feature type="compositionally biased region" description="Gly residues" evidence="4">
    <location>
        <begin position="1323"/>
        <end position="1338"/>
    </location>
</feature>
<feature type="compositionally biased region" description="Low complexity" evidence="4">
    <location>
        <begin position="1339"/>
        <end position="1367"/>
    </location>
</feature>
<feature type="compositionally biased region" description="Low complexity" evidence="4">
    <location>
        <begin position="1376"/>
        <end position="1410"/>
    </location>
</feature>
<feature type="compositionally biased region" description="Low complexity" evidence="4">
    <location>
        <begin position="1420"/>
        <end position="1433"/>
    </location>
</feature>
<feature type="compositionally biased region" description="Gly residues" evidence="4">
    <location>
        <begin position="1434"/>
        <end position="1444"/>
    </location>
</feature>
<feature type="compositionally biased region" description="Low complexity" evidence="4">
    <location>
        <begin position="1445"/>
        <end position="1461"/>
    </location>
</feature>
<feature type="compositionally biased region" description="Low complexity" evidence="4">
    <location>
        <begin position="1468"/>
        <end position="1493"/>
    </location>
</feature>
<feature type="compositionally biased region" description="Low complexity" evidence="4">
    <location>
        <begin position="1501"/>
        <end position="1610"/>
    </location>
</feature>
<feature type="compositionally biased region" description="Gly residues" evidence="4">
    <location>
        <begin position="1611"/>
        <end position="1621"/>
    </location>
</feature>
<feature type="compositionally biased region" description="Low complexity" evidence="4">
    <location>
        <begin position="1622"/>
        <end position="1631"/>
    </location>
</feature>
<feature type="compositionally biased region" description="Low complexity" evidence="4">
    <location>
        <begin position="1645"/>
        <end position="1670"/>
    </location>
</feature>
<feature type="compositionally biased region" description="Gly residues" evidence="4">
    <location>
        <begin position="1671"/>
        <end position="1686"/>
    </location>
</feature>
<feature type="compositionally biased region" description="Low complexity" evidence="4">
    <location>
        <begin position="1687"/>
        <end position="1715"/>
    </location>
</feature>
<feature type="compositionally biased region" description="Low complexity" evidence="4">
    <location>
        <begin position="1724"/>
        <end position="1758"/>
    </location>
</feature>
<feature type="compositionally biased region" description="Low complexity" evidence="4">
    <location>
        <begin position="1768"/>
        <end position="1781"/>
    </location>
</feature>
<feature type="compositionally biased region" description="Gly residues" evidence="4">
    <location>
        <begin position="1782"/>
        <end position="1792"/>
    </location>
</feature>
<feature type="compositionally biased region" description="Polar residues" evidence="4">
    <location>
        <begin position="1800"/>
        <end position="1811"/>
    </location>
</feature>
<feature type="compositionally biased region" description="Low complexity" evidence="4">
    <location>
        <begin position="1816"/>
        <end position="1841"/>
    </location>
</feature>
<feature type="compositionally biased region" description="Low complexity" evidence="4">
    <location>
        <begin position="1849"/>
        <end position="1958"/>
    </location>
</feature>
<feature type="compositionally biased region" description="Gly residues" evidence="4">
    <location>
        <begin position="1959"/>
        <end position="1969"/>
    </location>
</feature>
<feature type="compositionally biased region" description="Low complexity" evidence="4">
    <location>
        <begin position="1970"/>
        <end position="1986"/>
    </location>
</feature>
<feature type="compositionally biased region" description="Low complexity" evidence="4">
    <location>
        <begin position="1993"/>
        <end position="2018"/>
    </location>
</feature>
<feature type="compositionally biased region" description="Gly residues" evidence="4">
    <location>
        <begin position="2019"/>
        <end position="2034"/>
    </location>
</feature>
<feature type="compositionally biased region" description="Low complexity" evidence="4">
    <location>
        <begin position="2035"/>
        <end position="2063"/>
    </location>
</feature>
<feature type="compositionally biased region" description="Low complexity" evidence="4">
    <location>
        <begin position="2072"/>
        <end position="2106"/>
    </location>
</feature>
<feature type="compositionally biased region" description="Low complexity" evidence="4">
    <location>
        <begin position="2116"/>
        <end position="2129"/>
    </location>
</feature>
<feature type="compositionally biased region" description="Gly residues" evidence="4">
    <location>
        <begin position="2130"/>
        <end position="2140"/>
    </location>
</feature>
<feature type="compositionally biased region" description="Low complexity" evidence="4">
    <location>
        <begin position="2141"/>
        <end position="2157"/>
    </location>
</feature>
<feature type="compositionally biased region" description="Low complexity" evidence="4">
    <location>
        <begin position="2164"/>
        <end position="2189"/>
    </location>
</feature>
<feature type="compositionally biased region" description="Gly residues" evidence="4">
    <location>
        <begin position="2190"/>
        <end position="2205"/>
    </location>
</feature>
<feature type="compositionally biased region" description="Low complexity" evidence="4">
    <location>
        <begin position="2206"/>
        <end position="2234"/>
    </location>
</feature>
<feature type="compositionally biased region" description="Low complexity" evidence="4">
    <location>
        <begin position="2243"/>
        <end position="2300"/>
    </location>
</feature>
<feature type="compositionally biased region" description="Gly residues" evidence="4">
    <location>
        <begin position="2301"/>
        <end position="2311"/>
    </location>
</feature>
<feature type="compositionally biased region" description="Low complexity" evidence="4">
    <location>
        <begin position="2312"/>
        <end position="2328"/>
    </location>
</feature>
<feature type="compositionally biased region" description="Low complexity" evidence="4">
    <location>
        <begin position="2335"/>
        <end position="2360"/>
    </location>
</feature>
<feature type="compositionally biased region" description="Gly residues" evidence="4">
    <location>
        <begin position="2361"/>
        <end position="2376"/>
    </location>
</feature>
<feature type="compositionally biased region" description="Low complexity" evidence="4">
    <location>
        <begin position="2377"/>
        <end position="2405"/>
    </location>
</feature>
<feature type="compositionally biased region" description="Low complexity" evidence="4">
    <location>
        <begin position="2414"/>
        <end position="2448"/>
    </location>
</feature>
<feature type="compositionally biased region" description="Low complexity" evidence="4">
    <location>
        <begin position="2458"/>
        <end position="2471"/>
    </location>
</feature>
<feature type="compositionally biased region" description="Gly residues" evidence="4">
    <location>
        <begin position="2472"/>
        <end position="2482"/>
    </location>
</feature>
<feature type="binding site" evidence="6">
    <location>
        <position position="27"/>
    </location>
    <ligand>
        <name>Ca(2+)</name>
        <dbReference type="ChEBI" id="CHEBI:29108"/>
        <label>1</label>
    </ligand>
</feature>
<feature type="binding site" evidence="6">
    <location>
        <position position="32"/>
    </location>
    <ligand>
        <name>Ca(2+)</name>
        <dbReference type="ChEBI" id="CHEBI:29108"/>
        <label>1</label>
    </ligand>
</feature>
<feature type="binding site" evidence="3">
    <location>
        <position position="62"/>
    </location>
    <ligand>
        <name>Ca(2+)</name>
        <dbReference type="ChEBI" id="CHEBI:29108"/>
        <label>2</label>
    </ligand>
</feature>
<feature type="binding site" evidence="3">
    <location>
        <position position="64"/>
    </location>
    <ligand>
        <name>Ca(2+)</name>
        <dbReference type="ChEBI" id="CHEBI:29108"/>
        <label>2</label>
    </ligand>
</feature>
<feature type="binding site" evidence="3">
    <location>
        <position position="66"/>
    </location>
    <ligand>
        <name>Ca(2+)</name>
        <dbReference type="ChEBI" id="CHEBI:29108"/>
        <label>2</label>
    </ligand>
</feature>
<feature type="binding site" evidence="3">
    <location>
        <position position="68"/>
    </location>
    <ligand>
        <name>Ca(2+)</name>
        <dbReference type="ChEBI" id="CHEBI:29108"/>
        <label>2</label>
    </ligand>
</feature>
<feature type="binding site" evidence="3">
    <location>
        <position position="73"/>
    </location>
    <ligand>
        <name>Ca(2+)</name>
        <dbReference type="ChEBI" id="CHEBI:29108"/>
        <label>2</label>
    </ligand>
</feature>
<feature type="modified residue" description="Phosphoserine" evidence="2">
    <location>
        <position position="506"/>
    </location>
</feature>
<feature type="modified residue" description="Phosphoserine" evidence="2">
    <location>
        <position position="508"/>
    </location>
</feature>
<feature type="modified residue" description="Omega-N-methylarginine" evidence="7">
    <location>
        <position position="646"/>
    </location>
</feature>
<feature type="modified residue" description="Phosphoserine" evidence="2">
    <location>
        <position position="716"/>
    </location>
</feature>
<feature type="modified residue" description="Phosphoserine" evidence="2">
    <location>
        <position position="815"/>
    </location>
</feature>
<feature type="modified residue" description="Omega-N-methylarginine" evidence="7">
    <location>
        <position position="995"/>
    </location>
</feature>
<feature type="modified residue" description="Phosphoserine" evidence="2">
    <location>
        <position position="1229"/>
    </location>
</feature>
<feature type="modified residue" description="Omega-N-methylarginine" evidence="7">
    <location>
        <position position="1343"/>
    </location>
</feature>
<feature type="modified residue" description="Phosphoserine" evidence="2">
    <location>
        <position position="1551"/>
    </location>
</feature>
<feature type="modified residue" description="Phosphoserine" evidence="2">
    <location>
        <position position="1553"/>
    </location>
</feature>
<feature type="modified residue" description="Phosphoserine" evidence="2">
    <location>
        <position position="1650"/>
    </location>
</feature>
<feature type="modified residue" description="Omega-N-methylarginine" evidence="7">
    <location>
        <position position="1691"/>
    </location>
</feature>
<feature type="modified residue" description="Phosphoserine" evidence="2">
    <location>
        <position position="2011"/>
    </location>
</feature>
<feature type="modified residue" description="Omega-N-methylarginine" evidence="7">
    <location>
        <position position="2039"/>
    </location>
</feature>
<feature type="modified residue" description="Phosphoserine" evidence="2">
    <location>
        <position position="2109"/>
    </location>
</feature>
<feature type="modified residue" description="Phosphoserine" evidence="2">
    <location>
        <position position="2124"/>
    </location>
</feature>
<feature type="modified residue" description="Omega-N-methylarginine" evidence="7">
    <location>
        <position position="2210"/>
    </location>
</feature>
<feature type="modified residue" description="Phosphoserine" evidence="2">
    <location>
        <position position="2353"/>
    </location>
</feature>
<feature type="modified residue" description="Omega-N-methylarginine" evidence="7">
    <location>
        <position position="2381"/>
    </location>
</feature>
<sequence length="2496" mass="247587">MPKLLESIVTVIDVFYQYATEYGNCDMLSKEEMKELLVTEFHQILKNPDDPDTVDIIMQNLDRDHNHKVDFTEYLLMILKLTKACNKIIGKDYCQASGSKQKNHSHQHQEEQSKKETENKEQKGSISSSAGENDSYSRGSRGSNKSKSKKLRKGKEQSSKQTTKSNSSDHENSEDYEQGQHESGFSNSSGNGRPSSRKASGFPQPGSEQGQSSSSSTKGSGECYSSGNGKHGSSSGGSAVSGSGHSNTYGKQGTGSRHSSSNRRSRSTSRESSGSQEYSSGSSEEPGFTHGSGRKNSSTCGKNGSYSGQSTGRHQQGFGSSHELESGQSITSANHGSHSNQSSCSGTRECGSSESSMKKTHVSGSGHSSSTGKYTSTSGQNYNSTRQGCGQGKSSGSEQYGASSGQSSGCSSGQSTRYGEQGSGSRNSSTQSRGRSTSRESSTSQQFGSGSGRSSGFSQGGSGQGRSSRGGQQGSFSGQTEGSQQHGSCCGQSSGYGQNEYGSGHSASSGQQGSHYSQSSSYGTHNSGGSPSSSQRGHGSRSGRSSGLGQYGSPSGQTSSSTRQGSGQGQASGSGRYGASSGQTSGCGSGQSTRYGEQGSGSRNSSTQSRGRSTSRESSTSQRYGSGSGESSGFSQGGSGQGRSSRGGQQGSFSGQTSGRSQHQSGSRHGSGSGQFPISGQQGSHHGHSSSSGTHNSGSSQSSSTQWSHGSGSEQSSGLGHYGSTSGQTASSTRQGSGQGQASGSGRCGASSGQTSGCGSGQSTRYGEQGSGSRNSSTQSRGRSTSRESSTSQRFGSGSGGSSGFSQGRSGQGRSSRGGQQGSFSGQTEGSQQHGSCCGQSSGYGQNEYGSGHSASSGQQGSHYSQSSSYGTHNSGGSPSSRPAGGHGSRSGRSSGLGQYGSPSGQTSSSTRQGSGQGQASGSGRYGASSGQTSGCGSGQSTRYGEQGSGSRNSSTQSRGRSTSRESSTSQRYGSGSGESSGFSQGGSGQGRSSRGGQQGSFSGQTSGRSQHQSGSRHGSGSGQFPISGQQGSHHGHSSSSGTHNSGSSQSSSTQWSHGSGSEQSSGLGHYGSTSGQTASSTRQGSGQGQASGSGRCGASSGQTSGCGSGQSTRYGEQGSGSRNSSTQSRGRSTSRESSTSQRFGSGSGGSSGFSQGRSGQGRSSRGGQQGSFSGQTEGSQQHGSCCGQSSGYGQNEYGSGHSASSGQQGSHYSQSSSYGTHNSGGSPSSSQRGHGSRSGRSSGLGQYGSPSGQTSSSTRQGSGQGQASGSGRYGASSGQTSGCRSGQSTRYGGQGSGSRNSSTQSRGRSTSRESSTSQRYGSGSGESSGFSQGGSGQGRSSRGGQQGSFSGQTSGRNQHQSGSRHGSGSGQFPISGQQGSHHGHSSSSGTHNSGSSQSSSTQWSHGSGSEQSSGLGHYGSTSGQTASSTRQGSGQGQASGSGRCGASSGQTSGCGSGQSTRYGEQGSGSRNSSTQSRGRSTSRESSTSQRFGSGSGGSSGFSQGRSGQGRSSRGGQQGSFSGQTEGSQQHGSCCGQSSGYGQNEYGSGHSASSGQQGSHYSQSSSYGTHNSGGSPSSSQRGHGSRSGRSSGLGQYGSPSGQTSSSTRQGSGQGQASGSGRYGASSGQTSGCGSGQPTRYGEQGSGSRNSSTQSRGRSTSRESSTSQRCGSGSGESSGFSQGGSGQGRSSRGGQQGSFSGQTSGRSQHQSGSRHGSGSGQFPISGQQGSHHGHSSSSGTHNSGSSQSSSTQWSHGSGSEQSSGLGHYGSTSGQTASSTRQGSGQGQASGSGRCGASSGQTSGCGSDQSTRYGEQGSGSRNSSTQSRGRSTSRESSTSQRFGSGSGGSSGFSQGRSGQGRSSRGGQQGSFSGQTEGSQQHGSCCGQSSGYGQNEYGSGHSASSGQQGSHYSQSSSYGTHNSGGSPSSSQRGHGSRSGRSSGLGQYGSPSGQTSSSTRQGSGQGQASGSGRYGASSGQTSGCGSGQSTRYGEQGSGSRNSSTQSRGRSTSRESSTSQRYGSGSGESSGFSQGGSGQGRSSRGGQQGSFSGQTSGRSQHQSGSRHGSGSGQFPISGQQGSHHGHSSSSGTHNSGSSQSSSTQWSHGSGSEQSSGLGHYGSTSGQTASSTRQGSGQGQASGSGRCGASSGQTSGCGSGQSTRYGEQGSGSRNSSTQSRGRSTSRESSTSQRYGSGSGESSGFSQGGSGQGRSSRGGQQGSFSGQTSGRSQHQSGSRHGSGSGQFPISGQQGSHHGHSSSSGTHNSGSSQSSSTQWSHGSGSEQSSGLGQYGSPSGQTSSSTRQGSGQGQASGSGRYGASSGQTSGCGSGQSTRYGEQGSGSRNSSTQSRGRSTSRESSTSQRYGSGSGESSGFSQGGSGQGRSSRGGQQGSFSGQTSGRSQHQSGSRHGSGSGQFPISGQQGSHHGHSSSSGTHNSGSSQSSSTQWSHGSGSEQSSGLGHYGSTSGQTASSTRQGSGQGQASGSGRCGASSGQTSGCGSG</sequence>
<gene>
    <name type="primary">Hrnr</name>
</gene>
<dbReference type="EMBL" id="AY027660">
    <property type="protein sequence ID" value="AAK15791.1"/>
    <property type="molecule type" value="mRNA"/>
</dbReference>
<dbReference type="SMR" id="Q8VHD8"/>
<dbReference type="FunCoup" id="Q8VHD8">
    <property type="interactions" value="38"/>
</dbReference>
<dbReference type="STRING" id="10090.ENSMUSP00000088369"/>
<dbReference type="GlyGen" id="Q8VHD8">
    <property type="glycosylation" value="1 site, 1 N-linked glycan (1 site)"/>
</dbReference>
<dbReference type="iPTMnet" id="Q8VHD8"/>
<dbReference type="PhosphoSitePlus" id="Q8VHD8"/>
<dbReference type="CPTAC" id="non-CPTAC-4039"/>
<dbReference type="PaxDb" id="10090-ENSMUSP00000088369"/>
<dbReference type="ProteomicsDB" id="273188"/>
<dbReference type="AGR" id="MGI:3046938"/>
<dbReference type="MGI" id="MGI:3046938">
    <property type="gene designation" value="Hrnr"/>
</dbReference>
<dbReference type="eggNOG" id="ENOG502QQH0">
    <property type="taxonomic scope" value="Eukaryota"/>
</dbReference>
<dbReference type="InParanoid" id="Q8VHD8"/>
<dbReference type="Reactome" id="R-MMU-6798695">
    <property type="pathway name" value="Neutrophil degranulation"/>
</dbReference>
<dbReference type="PRO" id="PR:Q8VHD8"/>
<dbReference type="Proteomes" id="UP000000589">
    <property type="component" value="Unplaced"/>
</dbReference>
<dbReference type="RNAct" id="Q8VHD8">
    <property type="molecule type" value="protein"/>
</dbReference>
<dbReference type="GO" id="GO:0001533">
    <property type="term" value="C:cornified envelope"/>
    <property type="evidence" value="ECO:0000314"/>
    <property type="project" value="MGI"/>
</dbReference>
<dbReference type="GO" id="GO:0005509">
    <property type="term" value="F:calcium ion binding"/>
    <property type="evidence" value="ECO:0007669"/>
    <property type="project" value="InterPro"/>
</dbReference>
<dbReference type="GO" id="GO:0046914">
    <property type="term" value="F:transition metal ion binding"/>
    <property type="evidence" value="ECO:0007669"/>
    <property type="project" value="InterPro"/>
</dbReference>
<dbReference type="GO" id="GO:0002244">
    <property type="term" value="P:hematopoietic progenitor cell differentiation"/>
    <property type="evidence" value="ECO:0000315"/>
    <property type="project" value="MGI"/>
</dbReference>
<dbReference type="GO" id="GO:0031424">
    <property type="term" value="P:keratinization"/>
    <property type="evidence" value="ECO:0007669"/>
    <property type="project" value="UniProtKB-KW"/>
</dbReference>
<dbReference type="CDD" id="cd00213">
    <property type="entry name" value="S-100"/>
    <property type="match status" value="1"/>
</dbReference>
<dbReference type="FunFam" id="1.10.238.10:FF:000133">
    <property type="entry name" value="Filaggrin"/>
    <property type="match status" value="1"/>
</dbReference>
<dbReference type="Gene3D" id="1.10.238.10">
    <property type="entry name" value="EF-hand"/>
    <property type="match status" value="1"/>
</dbReference>
<dbReference type="InterPro" id="IPR011992">
    <property type="entry name" value="EF-hand-dom_pair"/>
</dbReference>
<dbReference type="InterPro" id="IPR018247">
    <property type="entry name" value="EF_Hand_1_Ca_BS"/>
</dbReference>
<dbReference type="InterPro" id="IPR002048">
    <property type="entry name" value="EF_hand_dom"/>
</dbReference>
<dbReference type="InterPro" id="IPR034325">
    <property type="entry name" value="S-100_dom"/>
</dbReference>
<dbReference type="InterPro" id="IPR052503">
    <property type="entry name" value="S100-fused_Epidermal_Struct"/>
</dbReference>
<dbReference type="InterPro" id="IPR001751">
    <property type="entry name" value="S100/CaBP7/8-like_CS"/>
</dbReference>
<dbReference type="InterPro" id="IPR013787">
    <property type="entry name" value="S100_Ca-bd_sub"/>
</dbReference>
<dbReference type="PANTHER" id="PTHR22571">
    <property type="entry name" value="FILAGGRIN-RELATED"/>
    <property type="match status" value="1"/>
</dbReference>
<dbReference type="PANTHER" id="PTHR22571:SF25">
    <property type="entry name" value="HORNERIN"/>
    <property type="match status" value="1"/>
</dbReference>
<dbReference type="Pfam" id="PF01023">
    <property type="entry name" value="S_100"/>
    <property type="match status" value="1"/>
</dbReference>
<dbReference type="SMART" id="SM01394">
    <property type="entry name" value="S_100"/>
    <property type="match status" value="1"/>
</dbReference>
<dbReference type="SUPFAM" id="SSF47473">
    <property type="entry name" value="EF-hand"/>
    <property type="match status" value="1"/>
</dbReference>
<dbReference type="PROSITE" id="PS00018">
    <property type="entry name" value="EF_HAND_1"/>
    <property type="match status" value="1"/>
</dbReference>
<dbReference type="PROSITE" id="PS50222">
    <property type="entry name" value="EF_HAND_2"/>
    <property type="match status" value="1"/>
</dbReference>
<dbReference type="PROSITE" id="PS00303">
    <property type="entry name" value="S100_CABP"/>
    <property type="match status" value="1"/>
</dbReference>
<organism>
    <name type="scientific">Mus musculus</name>
    <name type="common">Mouse</name>
    <dbReference type="NCBI Taxonomy" id="10090"/>
    <lineage>
        <taxon>Eukaryota</taxon>
        <taxon>Metazoa</taxon>
        <taxon>Chordata</taxon>
        <taxon>Craniata</taxon>
        <taxon>Vertebrata</taxon>
        <taxon>Euteleostomi</taxon>
        <taxon>Mammalia</taxon>
        <taxon>Eutheria</taxon>
        <taxon>Euarchontoglires</taxon>
        <taxon>Glires</taxon>
        <taxon>Rodentia</taxon>
        <taxon>Myomorpha</taxon>
        <taxon>Muroidea</taxon>
        <taxon>Muridae</taxon>
        <taxon>Murinae</taxon>
        <taxon>Mus</taxon>
        <taxon>Mus</taxon>
    </lineage>
</organism>